<evidence type="ECO:0000255" key="1">
    <source>
        <dbReference type="HAMAP-Rule" id="MF_01321"/>
    </source>
</evidence>
<keyword id="KW-0007">Acetylation</keyword>
<keyword id="KW-0240">DNA-directed RNA polymerase</keyword>
<keyword id="KW-0548">Nucleotidyltransferase</keyword>
<keyword id="KW-1185">Reference proteome</keyword>
<keyword id="KW-0804">Transcription</keyword>
<keyword id="KW-0808">Transferase</keyword>
<protein>
    <recommendedName>
        <fullName evidence="1">DNA-directed RNA polymerase subunit beta</fullName>
        <shortName evidence="1">RNAP subunit beta</shortName>
        <ecNumber evidence="1">2.7.7.6</ecNumber>
    </recommendedName>
    <alternativeName>
        <fullName evidence="1">RNA polymerase subunit beta</fullName>
    </alternativeName>
    <alternativeName>
        <fullName evidence="1">Transcriptase subunit beta</fullName>
    </alternativeName>
</protein>
<gene>
    <name evidence="1" type="primary">rpoB</name>
    <name type="ordered locus">EC55989_4471</name>
</gene>
<organism>
    <name type="scientific">Escherichia coli (strain 55989 / EAEC)</name>
    <dbReference type="NCBI Taxonomy" id="585055"/>
    <lineage>
        <taxon>Bacteria</taxon>
        <taxon>Pseudomonadati</taxon>
        <taxon>Pseudomonadota</taxon>
        <taxon>Gammaproteobacteria</taxon>
        <taxon>Enterobacterales</taxon>
        <taxon>Enterobacteriaceae</taxon>
        <taxon>Escherichia</taxon>
    </lineage>
</organism>
<feature type="chain" id="PRO_1000165806" description="DNA-directed RNA polymerase subunit beta">
    <location>
        <begin position="1"/>
        <end position="1342"/>
    </location>
</feature>
<feature type="modified residue" description="N6-acetyllysine" evidence="1">
    <location>
        <position position="1022"/>
    </location>
</feature>
<feature type="modified residue" description="N6-acetyllysine" evidence="1">
    <location>
        <position position="1200"/>
    </location>
</feature>
<sequence>MVYSYTEKKRIRKDFGKRPQVLDVPYLLSIQLDSFQKFIEQDPEGQYGLEAAFRSVFPIQSYSGNSELQYVSYRLGEPVFDVQECQIRGVTYSAPLRVKLRLVIYEREAPEGTVKDIKEQEVYMGEIPLMTDNGTFVINGTERVIVSQLHRSPGVFFDSDKGKTHSSGKVLYNARIIPYRGSWLDFEFDPKDNLFVRIDRRRKLPATIILRALNYTTEQILDLFFEKVIFEIRDNKLQMELVPERLRGETASFDIEANGKVYVEKGRRITARHIRQLEKDDVKLIEVPVEYIAGKVVAKDYIDESTGELICAANMELSLDLLAKLSQSGHKRIETLFTNDLDHGPYISETLRVDPTNDRLSALVEIYRMMRPGEPPTREAAESLFENLFFSEDRYDLSAVGRMKFNRSLLREEIEGSGILSKDDIIDVMKKLIDIRNGKGEVDDIDHLGNRRIRSVGEMAENQFRVGLVRVERAVKERLSLGDLDTLMPQDMINAKPISAAVKEFFGSSQLSQFMDQNNPLSEITHKRRISALGPGGLTRERAGFEVRDVHPTHYGRVCPIETPEGPNIGLINSLSVYAQTNEYGFLETPYRKVTDGVVTDEIHYLSAIEEGNYVIAQANSNLDEEGHFVEDLVTCRSKGESSLFSRDQVDYMDVSTQQVVSVGASLIPFLEHDDANRALMGANMQRQAVPTLRADKPLVGTGMERAVAVDSGVTAVAKRGGVVQYVDASRIVIKVNEDEMYPGEAGIDIYNLTKYTRSNQNTCINQMPCVSLGEPVERGDVLADGPSTDLGELALGQNMRVAFMPWNGYNFEDSILVSERVVQEDRFTTIHIQELACVSRDTKLGPEEITADIPNVGEAALSKLDESGIVYIGAEVTGGDILVGKVTPKGETQLTPEEKLLRAIFGEKASDVKDSSLRVPNGVSGTVIDVQVFTRDGVEKDKRALEIEEMQLKQAKKDLSEELQILEAGLFSRIRAVLVAGGVEAEKLDKLPRDRWLELGLTDEEKQNQLEQLAEQYDELKHEFEKKLEAKRRKITQGDDLAPGVLKIVKVYLAVKRRIQPGDKMAGRHGNKGVISKINPIEDMPYDENGTPVDIVLNPLGVPSRMNIGQILETHLGMAAKGIGDKINAMLKQQQEVAKLREFIQRAYDLGADVRQKVDLSTFSDEEVMRLAENLRKGMPIATPVFDGAKEAEIKELLKLGDLPTSGQIRLYDGRTGEQFERPVTVGYMYMLKLNHLVDDKMHARSTGSYSLVTQQPLGGKAQFGGQRFGEMEVWALEAYGAAYTLQEMLTVKSDDVNGRTKMYKNIVDGNHQMEPGMPESFNVLLKEIRSLGINIELEDE</sequence>
<accession>B7LA80</accession>
<proteinExistence type="inferred from homology"/>
<dbReference type="EC" id="2.7.7.6" evidence="1"/>
<dbReference type="EMBL" id="CU928145">
    <property type="protein sequence ID" value="CAV01228.1"/>
    <property type="molecule type" value="Genomic_DNA"/>
</dbReference>
<dbReference type="RefSeq" id="WP_000263098.1">
    <property type="nucleotide sequence ID" value="NZ_CP028304.1"/>
</dbReference>
<dbReference type="SMR" id="B7LA80"/>
<dbReference type="GeneID" id="93777907"/>
<dbReference type="KEGG" id="eck:EC55989_4471"/>
<dbReference type="HOGENOM" id="CLU_000524_4_3_6"/>
<dbReference type="Proteomes" id="UP000000746">
    <property type="component" value="Chromosome"/>
</dbReference>
<dbReference type="GO" id="GO:0000428">
    <property type="term" value="C:DNA-directed RNA polymerase complex"/>
    <property type="evidence" value="ECO:0007669"/>
    <property type="project" value="UniProtKB-KW"/>
</dbReference>
<dbReference type="GO" id="GO:0003677">
    <property type="term" value="F:DNA binding"/>
    <property type="evidence" value="ECO:0007669"/>
    <property type="project" value="UniProtKB-UniRule"/>
</dbReference>
<dbReference type="GO" id="GO:0003899">
    <property type="term" value="F:DNA-directed RNA polymerase activity"/>
    <property type="evidence" value="ECO:0007669"/>
    <property type="project" value="UniProtKB-UniRule"/>
</dbReference>
<dbReference type="GO" id="GO:0032549">
    <property type="term" value="F:ribonucleoside binding"/>
    <property type="evidence" value="ECO:0007669"/>
    <property type="project" value="InterPro"/>
</dbReference>
<dbReference type="GO" id="GO:0006351">
    <property type="term" value="P:DNA-templated transcription"/>
    <property type="evidence" value="ECO:0007669"/>
    <property type="project" value="UniProtKB-UniRule"/>
</dbReference>
<dbReference type="CDD" id="cd00653">
    <property type="entry name" value="RNA_pol_B_RPB2"/>
    <property type="match status" value="1"/>
</dbReference>
<dbReference type="FunFam" id="2.30.150.10:FF:000001">
    <property type="entry name" value="DNA-directed RNA polymerase subunit beta"/>
    <property type="match status" value="1"/>
</dbReference>
<dbReference type="FunFam" id="2.40.270.10:FF:000003">
    <property type="entry name" value="DNA-directed RNA polymerase subunit beta"/>
    <property type="match status" value="1"/>
</dbReference>
<dbReference type="FunFam" id="2.40.270.10:FF:000004">
    <property type="entry name" value="DNA-directed RNA polymerase subunit beta"/>
    <property type="match status" value="1"/>
</dbReference>
<dbReference type="FunFam" id="2.40.50.100:FF:000006">
    <property type="entry name" value="DNA-directed RNA polymerase subunit beta"/>
    <property type="match status" value="1"/>
</dbReference>
<dbReference type="FunFam" id="2.40.50.150:FF:000001">
    <property type="entry name" value="DNA-directed RNA polymerase subunit beta"/>
    <property type="match status" value="1"/>
</dbReference>
<dbReference type="FunFam" id="3.90.1100.10:FF:000002">
    <property type="entry name" value="DNA-directed RNA polymerase subunit beta"/>
    <property type="match status" value="1"/>
</dbReference>
<dbReference type="FunFam" id="3.90.1110.10:FF:000001">
    <property type="entry name" value="DNA-directed RNA polymerase subunit beta"/>
    <property type="match status" value="1"/>
</dbReference>
<dbReference type="FunFam" id="3.90.1110.10:FF:000004">
    <property type="entry name" value="DNA-directed RNA polymerase subunit beta"/>
    <property type="match status" value="1"/>
</dbReference>
<dbReference type="FunFam" id="3.90.1800.10:FF:000001">
    <property type="entry name" value="DNA-directed RNA polymerase subunit beta"/>
    <property type="match status" value="1"/>
</dbReference>
<dbReference type="Gene3D" id="2.40.50.100">
    <property type="match status" value="1"/>
</dbReference>
<dbReference type="Gene3D" id="2.40.50.150">
    <property type="match status" value="1"/>
</dbReference>
<dbReference type="Gene3D" id="3.90.1100.10">
    <property type="match status" value="2"/>
</dbReference>
<dbReference type="Gene3D" id="6.10.140.1670">
    <property type="match status" value="1"/>
</dbReference>
<dbReference type="Gene3D" id="2.30.150.10">
    <property type="entry name" value="DNA-directed RNA polymerase, beta subunit, external 1 domain"/>
    <property type="match status" value="1"/>
</dbReference>
<dbReference type="Gene3D" id="2.40.270.10">
    <property type="entry name" value="DNA-directed RNA polymerase, subunit 2, domain 6"/>
    <property type="match status" value="1"/>
</dbReference>
<dbReference type="Gene3D" id="3.90.1800.10">
    <property type="entry name" value="RNA polymerase alpha subunit dimerisation domain"/>
    <property type="match status" value="1"/>
</dbReference>
<dbReference type="Gene3D" id="3.90.1110.10">
    <property type="entry name" value="RNA polymerase Rpb2, domain 2"/>
    <property type="match status" value="1"/>
</dbReference>
<dbReference type="HAMAP" id="MF_01321">
    <property type="entry name" value="RNApol_bact_RpoB"/>
    <property type="match status" value="1"/>
</dbReference>
<dbReference type="InterPro" id="IPR042107">
    <property type="entry name" value="DNA-dir_RNA_pol_bsu_ext_1_sf"/>
</dbReference>
<dbReference type="InterPro" id="IPR019462">
    <property type="entry name" value="DNA-dir_RNA_pol_bsu_external_1"/>
</dbReference>
<dbReference type="InterPro" id="IPR015712">
    <property type="entry name" value="DNA-dir_RNA_pol_su2"/>
</dbReference>
<dbReference type="InterPro" id="IPR007120">
    <property type="entry name" value="DNA-dir_RNAP_su2_dom"/>
</dbReference>
<dbReference type="InterPro" id="IPR037033">
    <property type="entry name" value="DNA-dir_RNAP_su2_hyb_sf"/>
</dbReference>
<dbReference type="InterPro" id="IPR010243">
    <property type="entry name" value="RNA_pol_bsu_bac"/>
</dbReference>
<dbReference type="InterPro" id="IPR007121">
    <property type="entry name" value="RNA_pol_bsu_CS"/>
</dbReference>
<dbReference type="InterPro" id="IPR007644">
    <property type="entry name" value="RNA_pol_bsu_protrusion"/>
</dbReference>
<dbReference type="InterPro" id="IPR007642">
    <property type="entry name" value="RNA_pol_Rpb2_2"/>
</dbReference>
<dbReference type="InterPro" id="IPR037034">
    <property type="entry name" value="RNA_pol_Rpb2_2_sf"/>
</dbReference>
<dbReference type="InterPro" id="IPR007645">
    <property type="entry name" value="RNA_pol_Rpb2_3"/>
</dbReference>
<dbReference type="InterPro" id="IPR007641">
    <property type="entry name" value="RNA_pol_Rpb2_7"/>
</dbReference>
<dbReference type="InterPro" id="IPR014724">
    <property type="entry name" value="RNA_pol_RPB2_OB-fold"/>
</dbReference>
<dbReference type="NCBIfam" id="NF001616">
    <property type="entry name" value="PRK00405.1"/>
    <property type="match status" value="1"/>
</dbReference>
<dbReference type="NCBIfam" id="TIGR02013">
    <property type="entry name" value="rpoB"/>
    <property type="match status" value="1"/>
</dbReference>
<dbReference type="PANTHER" id="PTHR20856">
    <property type="entry name" value="DNA-DIRECTED RNA POLYMERASE I SUBUNIT 2"/>
    <property type="match status" value="1"/>
</dbReference>
<dbReference type="Pfam" id="PF04563">
    <property type="entry name" value="RNA_pol_Rpb2_1"/>
    <property type="match status" value="1"/>
</dbReference>
<dbReference type="Pfam" id="PF04561">
    <property type="entry name" value="RNA_pol_Rpb2_2"/>
    <property type="match status" value="2"/>
</dbReference>
<dbReference type="Pfam" id="PF04565">
    <property type="entry name" value="RNA_pol_Rpb2_3"/>
    <property type="match status" value="1"/>
</dbReference>
<dbReference type="Pfam" id="PF10385">
    <property type="entry name" value="RNA_pol_Rpb2_45"/>
    <property type="match status" value="1"/>
</dbReference>
<dbReference type="Pfam" id="PF00562">
    <property type="entry name" value="RNA_pol_Rpb2_6"/>
    <property type="match status" value="1"/>
</dbReference>
<dbReference type="Pfam" id="PF04560">
    <property type="entry name" value="RNA_pol_Rpb2_7"/>
    <property type="match status" value="1"/>
</dbReference>
<dbReference type="SUPFAM" id="SSF64484">
    <property type="entry name" value="beta and beta-prime subunits of DNA dependent RNA-polymerase"/>
    <property type="match status" value="1"/>
</dbReference>
<dbReference type="PROSITE" id="PS01166">
    <property type="entry name" value="RNA_POL_BETA"/>
    <property type="match status" value="1"/>
</dbReference>
<name>RPOB_ECO55</name>
<reference key="1">
    <citation type="journal article" date="2009" name="PLoS Genet.">
        <title>Organised genome dynamics in the Escherichia coli species results in highly diverse adaptive paths.</title>
        <authorList>
            <person name="Touchon M."/>
            <person name="Hoede C."/>
            <person name="Tenaillon O."/>
            <person name="Barbe V."/>
            <person name="Baeriswyl S."/>
            <person name="Bidet P."/>
            <person name="Bingen E."/>
            <person name="Bonacorsi S."/>
            <person name="Bouchier C."/>
            <person name="Bouvet O."/>
            <person name="Calteau A."/>
            <person name="Chiapello H."/>
            <person name="Clermont O."/>
            <person name="Cruveiller S."/>
            <person name="Danchin A."/>
            <person name="Diard M."/>
            <person name="Dossat C."/>
            <person name="Karoui M.E."/>
            <person name="Frapy E."/>
            <person name="Garry L."/>
            <person name="Ghigo J.M."/>
            <person name="Gilles A.M."/>
            <person name="Johnson J."/>
            <person name="Le Bouguenec C."/>
            <person name="Lescat M."/>
            <person name="Mangenot S."/>
            <person name="Martinez-Jehanne V."/>
            <person name="Matic I."/>
            <person name="Nassif X."/>
            <person name="Oztas S."/>
            <person name="Petit M.A."/>
            <person name="Pichon C."/>
            <person name="Rouy Z."/>
            <person name="Ruf C.S."/>
            <person name="Schneider D."/>
            <person name="Tourret J."/>
            <person name="Vacherie B."/>
            <person name="Vallenet D."/>
            <person name="Medigue C."/>
            <person name="Rocha E.P.C."/>
            <person name="Denamur E."/>
        </authorList>
    </citation>
    <scope>NUCLEOTIDE SEQUENCE [LARGE SCALE GENOMIC DNA]</scope>
    <source>
        <strain>55989 / EAEC</strain>
    </source>
</reference>
<comment type="function">
    <text evidence="1">DNA-dependent RNA polymerase catalyzes the transcription of DNA into RNA using the four ribonucleoside triphosphates as substrates.</text>
</comment>
<comment type="catalytic activity">
    <reaction evidence="1">
        <text>RNA(n) + a ribonucleoside 5'-triphosphate = RNA(n+1) + diphosphate</text>
        <dbReference type="Rhea" id="RHEA:21248"/>
        <dbReference type="Rhea" id="RHEA-COMP:14527"/>
        <dbReference type="Rhea" id="RHEA-COMP:17342"/>
        <dbReference type="ChEBI" id="CHEBI:33019"/>
        <dbReference type="ChEBI" id="CHEBI:61557"/>
        <dbReference type="ChEBI" id="CHEBI:140395"/>
        <dbReference type="EC" id="2.7.7.6"/>
    </reaction>
</comment>
<comment type="subunit">
    <text evidence="1">The RNAP catalytic core consists of 2 alpha, 1 beta, 1 beta' and 1 omega subunit. When a sigma factor is associated with the core the holoenzyme is formed, which can initiate transcription.</text>
</comment>
<comment type="similarity">
    <text evidence="1">Belongs to the RNA polymerase beta chain family.</text>
</comment>